<name>DNAJ_PEDPA</name>
<feature type="chain" id="PRO_1000085240" description="Chaperone protein DnaJ">
    <location>
        <begin position="1"/>
        <end position="374"/>
    </location>
</feature>
<feature type="domain" description="J" evidence="1">
    <location>
        <begin position="6"/>
        <end position="70"/>
    </location>
</feature>
<feature type="repeat" description="CXXCXGXG motif">
    <location>
        <begin position="148"/>
        <end position="155"/>
    </location>
</feature>
<feature type="repeat" description="CXXCXGXG motif">
    <location>
        <begin position="165"/>
        <end position="172"/>
    </location>
</feature>
<feature type="repeat" description="CXXCXGXG motif">
    <location>
        <begin position="191"/>
        <end position="198"/>
    </location>
</feature>
<feature type="repeat" description="CXXCXGXG motif">
    <location>
        <begin position="205"/>
        <end position="212"/>
    </location>
</feature>
<feature type="zinc finger region" description="CR-type" evidence="1">
    <location>
        <begin position="135"/>
        <end position="217"/>
    </location>
</feature>
<feature type="region of interest" description="Disordered" evidence="2">
    <location>
        <begin position="308"/>
        <end position="328"/>
    </location>
</feature>
<feature type="region of interest" description="Disordered" evidence="2">
    <location>
        <begin position="347"/>
        <end position="374"/>
    </location>
</feature>
<feature type="binding site" evidence="1">
    <location>
        <position position="148"/>
    </location>
    <ligand>
        <name>Zn(2+)</name>
        <dbReference type="ChEBI" id="CHEBI:29105"/>
        <label>1</label>
    </ligand>
</feature>
<feature type="binding site" evidence="1">
    <location>
        <position position="151"/>
    </location>
    <ligand>
        <name>Zn(2+)</name>
        <dbReference type="ChEBI" id="CHEBI:29105"/>
        <label>1</label>
    </ligand>
</feature>
<feature type="binding site" evidence="1">
    <location>
        <position position="165"/>
    </location>
    <ligand>
        <name>Zn(2+)</name>
        <dbReference type="ChEBI" id="CHEBI:29105"/>
        <label>2</label>
    </ligand>
</feature>
<feature type="binding site" evidence="1">
    <location>
        <position position="168"/>
    </location>
    <ligand>
        <name>Zn(2+)</name>
        <dbReference type="ChEBI" id="CHEBI:29105"/>
        <label>2</label>
    </ligand>
</feature>
<feature type="binding site" evidence="1">
    <location>
        <position position="191"/>
    </location>
    <ligand>
        <name>Zn(2+)</name>
        <dbReference type="ChEBI" id="CHEBI:29105"/>
        <label>2</label>
    </ligand>
</feature>
<feature type="binding site" evidence="1">
    <location>
        <position position="194"/>
    </location>
    <ligand>
        <name>Zn(2+)</name>
        <dbReference type="ChEBI" id="CHEBI:29105"/>
        <label>2</label>
    </ligand>
</feature>
<feature type="binding site" evidence="1">
    <location>
        <position position="205"/>
    </location>
    <ligand>
        <name>Zn(2+)</name>
        <dbReference type="ChEBI" id="CHEBI:29105"/>
        <label>1</label>
    </ligand>
</feature>
<feature type="binding site" evidence="1">
    <location>
        <position position="208"/>
    </location>
    <ligand>
        <name>Zn(2+)</name>
        <dbReference type="ChEBI" id="CHEBI:29105"/>
        <label>1</label>
    </ligand>
</feature>
<protein>
    <recommendedName>
        <fullName evidence="1">Chaperone protein DnaJ</fullName>
    </recommendedName>
</protein>
<comment type="function">
    <text evidence="1">Participates actively in the response to hyperosmotic and heat shock by preventing the aggregation of stress-denatured proteins and by disaggregating proteins, also in an autonomous, DnaK-independent fashion. Unfolded proteins bind initially to DnaJ; upon interaction with the DnaJ-bound protein, DnaK hydrolyzes its bound ATP, resulting in the formation of a stable complex. GrpE releases ADP from DnaK; ATP binding to DnaK triggers the release of the substrate protein, thus completing the reaction cycle. Several rounds of ATP-dependent interactions between DnaJ, DnaK and GrpE are required for fully efficient folding. Also involved, together with DnaK and GrpE, in the DNA replication of plasmids through activation of initiation proteins.</text>
</comment>
<comment type="cofactor">
    <cofactor evidence="1">
        <name>Zn(2+)</name>
        <dbReference type="ChEBI" id="CHEBI:29105"/>
    </cofactor>
    <text evidence="1">Binds 2 Zn(2+) ions per monomer.</text>
</comment>
<comment type="subunit">
    <text evidence="1">Homodimer.</text>
</comment>
<comment type="subcellular location">
    <subcellularLocation>
        <location evidence="1">Cytoplasm</location>
    </subcellularLocation>
</comment>
<comment type="domain">
    <text evidence="1">The J domain is necessary and sufficient to stimulate DnaK ATPase activity. Zinc center 1 plays an important role in the autonomous, DnaK-independent chaperone activity of DnaJ. Zinc center 2 is essential for interaction with DnaK and for DnaJ activity.</text>
</comment>
<comment type="similarity">
    <text evidence="1">Belongs to the DnaJ family.</text>
</comment>
<evidence type="ECO:0000255" key="1">
    <source>
        <dbReference type="HAMAP-Rule" id="MF_01152"/>
    </source>
</evidence>
<evidence type="ECO:0000256" key="2">
    <source>
        <dbReference type="SAM" id="MobiDB-lite"/>
    </source>
</evidence>
<gene>
    <name evidence="1" type="primary">dnaJ</name>
    <name type="ordered locus">PEPE_0897</name>
</gene>
<dbReference type="EMBL" id="CP000422">
    <property type="protein sequence ID" value="ABJ67956.1"/>
    <property type="molecule type" value="Genomic_DNA"/>
</dbReference>
<dbReference type="RefSeq" id="WP_002833625.1">
    <property type="nucleotide sequence ID" value="NC_008525.1"/>
</dbReference>
<dbReference type="SMR" id="Q03FR6"/>
<dbReference type="STRING" id="278197.PEPE_0897"/>
<dbReference type="GeneID" id="33062572"/>
<dbReference type="KEGG" id="ppe:PEPE_0897"/>
<dbReference type="eggNOG" id="COG0484">
    <property type="taxonomic scope" value="Bacteria"/>
</dbReference>
<dbReference type="HOGENOM" id="CLU_017633_0_7_9"/>
<dbReference type="OrthoDB" id="9779889at2"/>
<dbReference type="Proteomes" id="UP000000773">
    <property type="component" value="Chromosome"/>
</dbReference>
<dbReference type="GO" id="GO:0005737">
    <property type="term" value="C:cytoplasm"/>
    <property type="evidence" value="ECO:0007669"/>
    <property type="project" value="UniProtKB-SubCell"/>
</dbReference>
<dbReference type="GO" id="GO:0005524">
    <property type="term" value="F:ATP binding"/>
    <property type="evidence" value="ECO:0007669"/>
    <property type="project" value="InterPro"/>
</dbReference>
<dbReference type="GO" id="GO:0031072">
    <property type="term" value="F:heat shock protein binding"/>
    <property type="evidence" value="ECO:0007669"/>
    <property type="project" value="InterPro"/>
</dbReference>
<dbReference type="GO" id="GO:0051082">
    <property type="term" value="F:unfolded protein binding"/>
    <property type="evidence" value="ECO:0007669"/>
    <property type="project" value="UniProtKB-UniRule"/>
</dbReference>
<dbReference type="GO" id="GO:0008270">
    <property type="term" value="F:zinc ion binding"/>
    <property type="evidence" value="ECO:0007669"/>
    <property type="project" value="UniProtKB-UniRule"/>
</dbReference>
<dbReference type="GO" id="GO:0051085">
    <property type="term" value="P:chaperone cofactor-dependent protein refolding"/>
    <property type="evidence" value="ECO:0007669"/>
    <property type="project" value="TreeGrafter"/>
</dbReference>
<dbReference type="GO" id="GO:0006260">
    <property type="term" value="P:DNA replication"/>
    <property type="evidence" value="ECO:0007669"/>
    <property type="project" value="UniProtKB-KW"/>
</dbReference>
<dbReference type="GO" id="GO:0042026">
    <property type="term" value="P:protein refolding"/>
    <property type="evidence" value="ECO:0007669"/>
    <property type="project" value="TreeGrafter"/>
</dbReference>
<dbReference type="GO" id="GO:0009408">
    <property type="term" value="P:response to heat"/>
    <property type="evidence" value="ECO:0007669"/>
    <property type="project" value="InterPro"/>
</dbReference>
<dbReference type="CDD" id="cd06257">
    <property type="entry name" value="DnaJ"/>
    <property type="match status" value="1"/>
</dbReference>
<dbReference type="CDD" id="cd10747">
    <property type="entry name" value="DnaJ_C"/>
    <property type="match status" value="1"/>
</dbReference>
<dbReference type="CDD" id="cd10719">
    <property type="entry name" value="DnaJ_zf"/>
    <property type="match status" value="1"/>
</dbReference>
<dbReference type="FunFam" id="1.10.287.110:FF:000031">
    <property type="entry name" value="Molecular chaperone DnaJ"/>
    <property type="match status" value="1"/>
</dbReference>
<dbReference type="FunFam" id="2.60.260.20:FF:000004">
    <property type="entry name" value="Molecular chaperone DnaJ"/>
    <property type="match status" value="1"/>
</dbReference>
<dbReference type="Gene3D" id="6.20.20.10">
    <property type="match status" value="2"/>
</dbReference>
<dbReference type="Gene3D" id="1.10.287.110">
    <property type="entry name" value="DnaJ domain"/>
    <property type="match status" value="1"/>
</dbReference>
<dbReference type="Gene3D" id="2.60.260.20">
    <property type="entry name" value="Urease metallochaperone UreE, N-terminal domain"/>
    <property type="match status" value="2"/>
</dbReference>
<dbReference type="HAMAP" id="MF_01152">
    <property type="entry name" value="DnaJ"/>
    <property type="match status" value="1"/>
</dbReference>
<dbReference type="InterPro" id="IPR012724">
    <property type="entry name" value="DnaJ"/>
</dbReference>
<dbReference type="InterPro" id="IPR002939">
    <property type="entry name" value="DnaJ_C"/>
</dbReference>
<dbReference type="InterPro" id="IPR001623">
    <property type="entry name" value="DnaJ_domain"/>
</dbReference>
<dbReference type="InterPro" id="IPR018253">
    <property type="entry name" value="DnaJ_domain_CS"/>
</dbReference>
<dbReference type="InterPro" id="IPR008971">
    <property type="entry name" value="HSP40/DnaJ_pept-bd"/>
</dbReference>
<dbReference type="InterPro" id="IPR001305">
    <property type="entry name" value="HSP_DnaJ_Cys-rich_dom"/>
</dbReference>
<dbReference type="InterPro" id="IPR036410">
    <property type="entry name" value="HSP_DnaJ_Cys-rich_dom_sf"/>
</dbReference>
<dbReference type="InterPro" id="IPR036869">
    <property type="entry name" value="J_dom_sf"/>
</dbReference>
<dbReference type="NCBIfam" id="TIGR02349">
    <property type="entry name" value="DnaJ_bact"/>
    <property type="match status" value="1"/>
</dbReference>
<dbReference type="NCBIfam" id="NF008035">
    <property type="entry name" value="PRK10767.1"/>
    <property type="match status" value="1"/>
</dbReference>
<dbReference type="NCBIfam" id="NF010869">
    <property type="entry name" value="PRK14276.1"/>
    <property type="match status" value="1"/>
</dbReference>
<dbReference type="NCBIfam" id="NF010873">
    <property type="entry name" value="PRK14280.1"/>
    <property type="match status" value="1"/>
</dbReference>
<dbReference type="PANTHER" id="PTHR43096:SF48">
    <property type="entry name" value="CHAPERONE PROTEIN DNAJ"/>
    <property type="match status" value="1"/>
</dbReference>
<dbReference type="PANTHER" id="PTHR43096">
    <property type="entry name" value="DNAJ HOMOLOG 1, MITOCHONDRIAL-RELATED"/>
    <property type="match status" value="1"/>
</dbReference>
<dbReference type="Pfam" id="PF00226">
    <property type="entry name" value="DnaJ"/>
    <property type="match status" value="1"/>
</dbReference>
<dbReference type="Pfam" id="PF01556">
    <property type="entry name" value="DnaJ_C"/>
    <property type="match status" value="1"/>
</dbReference>
<dbReference type="Pfam" id="PF00684">
    <property type="entry name" value="DnaJ_CXXCXGXG"/>
    <property type="match status" value="1"/>
</dbReference>
<dbReference type="PRINTS" id="PR00625">
    <property type="entry name" value="JDOMAIN"/>
</dbReference>
<dbReference type="SMART" id="SM00271">
    <property type="entry name" value="DnaJ"/>
    <property type="match status" value="1"/>
</dbReference>
<dbReference type="SUPFAM" id="SSF46565">
    <property type="entry name" value="Chaperone J-domain"/>
    <property type="match status" value="1"/>
</dbReference>
<dbReference type="SUPFAM" id="SSF57938">
    <property type="entry name" value="DnaJ/Hsp40 cysteine-rich domain"/>
    <property type="match status" value="1"/>
</dbReference>
<dbReference type="SUPFAM" id="SSF49493">
    <property type="entry name" value="HSP40/DnaJ peptide-binding domain"/>
    <property type="match status" value="2"/>
</dbReference>
<dbReference type="PROSITE" id="PS00636">
    <property type="entry name" value="DNAJ_1"/>
    <property type="match status" value="1"/>
</dbReference>
<dbReference type="PROSITE" id="PS50076">
    <property type="entry name" value="DNAJ_2"/>
    <property type="match status" value="1"/>
</dbReference>
<dbReference type="PROSITE" id="PS51188">
    <property type="entry name" value="ZF_CR"/>
    <property type="match status" value="1"/>
</dbReference>
<reference key="1">
    <citation type="journal article" date="2006" name="Proc. Natl. Acad. Sci. U.S.A.">
        <title>Comparative genomics of the lactic acid bacteria.</title>
        <authorList>
            <person name="Makarova K.S."/>
            <person name="Slesarev A."/>
            <person name="Wolf Y.I."/>
            <person name="Sorokin A."/>
            <person name="Mirkin B."/>
            <person name="Koonin E.V."/>
            <person name="Pavlov A."/>
            <person name="Pavlova N."/>
            <person name="Karamychev V."/>
            <person name="Polouchine N."/>
            <person name="Shakhova V."/>
            <person name="Grigoriev I."/>
            <person name="Lou Y."/>
            <person name="Rohksar D."/>
            <person name="Lucas S."/>
            <person name="Huang K."/>
            <person name="Goodstein D.M."/>
            <person name="Hawkins T."/>
            <person name="Plengvidhya V."/>
            <person name="Welker D."/>
            <person name="Hughes J."/>
            <person name="Goh Y."/>
            <person name="Benson A."/>
            <person name="Baldwin K."/>
            <person name="Lee J.-H."/>
            <person name="Diaz-Muniz I."/>
            <person name="Dosti B."/>
            <person name="Smeianov V."/>
            <person name="Wechter W."/>
            <person name="Barabote R."/>
            <person name="Lorca G."/>
            <person name="Altermann E."/>
            <person name="Barrangou R."/>
            <person name="Ganesan B."/>
            <person name="Xie Y."/>
            <person name="Rawsthorne H."/>
            <person name="Tamir D."/>
            <person name="Parker C."/>
            <person name="Breidt F."/>
            <person name="Broadbent J.R."/>
            <person name="Hutkins R."/>
            <person name="O'Sullivan D."/>
            <person name="Steele J."/>
            <person name="Unlu G."/>
            <person name="Saier M.H. Jr."/>
            <person name="Klaenhammer T."/>
            <person name="Richardson P."/>
            <person name="Kozyavkin S."/>
            <person name="Weimer B.C."/>
            <person name="Mills D.A."/>
        </authorList>
    </citation>
    <scope>NUCLEOTIDE SEQUENCE [LARGE SCALE GENOMIC DNA]</scope>
    <source>
        <strain>ATCC 25745 / CCUG 21536 / LMG 10740 / 183-1w</strain>
    </source>
</reference>
<keyword id="KW-0143">Chaperone</keyword>
<keyword id="KW-0963">Cytoplasm</keyword>
<keyword id="KW-0235">DNA replication</keyword>
<keyword id="KW-0479">Metal-binding</keyword>
<keyword id="KW-0677">Repeat</keyword>
<keyword id="KW-0346">Stress response</keyword>
<keyword id="KW-0862">Zinc</keyword>
<keyword id="KW-0863">Zinc-finger</keyword>
<proteinExistence type="inferred from homology"/>
<accession>Q03FR6</accession>
<sequence>MAANKDYYDILGVSKDASDDEIKKAYRKLSKKYHPDINKAPDAEQKFKDVNEAYEVLGDSQKRAQYDQFGSADPNAGFGGGGFGGQGGFSDFGGGFEDIFGSFFGGGQRQSPNQPRQGEDLQYQMSLKFEEAIFGKKTTIKYSREALCKTCGGSGAKEGTSPVTCHKCNGTGTIQVTQNTPLGRMVRQQTCDVCNGTGKEIKEKCPTCGGTGHTSQQHEVKVSVPAGVEDGQQMRLQGQGEAGFNGGPYGDLYIIFQVQPSDMYERDGSEIYYNQTISFVQAALGDEIEVPTVHGKVKLKVPAGTQTGTNFRLKGKGAPRLRGNGTGDQHVKVKVTVPKKLNSGQKEALKQFAKASGEEPSGHGKSGFFDKFMN</sequence>
<organism>
    <name type="scientific">Pediococcus pentosaceus (strain ATCC 25745 / CCUG 21536 / LMG 10740 / 183-1w)</name>
    <dbReference type="NCBI Taxonomy" id="278197"/>
    <lineage>
        <taxon>Bacteria</taxon>
        <taxon>Bacillati</taxon>
        <taxon>Bacillota</taxon>
        <taxon>Bacilli</taxon>
        <taxon>Lactobacillales</taxon>
        <taxon>Lactobacillaceae</taxon>
        <taxon>Pediococcus</taxon>
    </lineage>
</organism>